<accession>P52193</accession>
<accession>P28489</accession>
<accession>P42918</accession>
<accession>Q8SQ53</accession>
<reference key="1">
    <citation type="journal article" date="1993" name="Biochim. Biophys. Acta">
        <title>Comparison of cDNAs from bovine brain coding for two isoforms of calreticulin.</title>
        <authorList>
            <person name="Liu N."/>
            <person name="Fine R.E."/>
            <person name="Johnson R.J."/>
        </authorList>
    </citation>
    <scope>NUCLEOTIDE SEQUENCE [MRNA]</scope>
    <source>
        <tissue>Brain</tissue>
    </source>
</reference>
<reference key="2">
    <citation type="submission" date="2001-08" db="EMBL/GenBank/DDBJ databases">
        <title>Bovine brain calreticulin.</title>
        <authorList>
            <person name="Hossain M.A."/>
            <person name="Takuwa K."/>
            <person name="Minakata H."/>
            <person name="Nakajima T."/>
        </authorList>
    </citation>
    <scope>NUCLEOTIDE SEQUENCE [MRNA]</scope>
    <source>
        <tissue>Brain</tissue>
    </source>
</reference>
<reference key="3">
    <citation type="journal article" date="1994" name="Biochem. J.">
        <title>Covalent structure of bovine brain calreticulin.</title>
        <authorList>
            <person name="Matsuoka K."/>
            <person name="Seta K."/>
            <person name="Yamakawa Y."/>
            <person name="Okuyama T."/>
            <person name="Shinoda T."/>
            <person name="Isobe T."/>
        </authorList>
    </citation>
    <scope>PROTEIN SEQUENCE OF 18-417</scope>
    <source>
        <tissue>Brain</tissue>
    </source>
</reference>
<reference key="4">
    <citation type="journal article" date="1991" name="J. Biol. Chem.">
        <title>Calreticulin, and not calsequestrin, is the major calcium binding protein of smooth muscle sarcoplasmic reticulum and liver endoplasmic reticulum.</title>
        <authorList>
            <person name="Milner R.E."/>
            <person name="Baksh S."/>
            <person name="Shemanko C."/>
            <person name="Carpenter M.R."/>
            <person name="Smillie L."/>
            <person name="Vance J.E."/>
            <person name="Opas M."/>
            <person name="Michalak M."/>
        </authorList>
    </citation>
    <scope>PROTEIN SEQUENCE OF 18-30</scope>
    <source>
        <tissue>Liver</tissue>
    </source>
</reference>
<reference key="5">
    <citation type="journal article" date="2003" name="Matrix Biol.">
        <title>Calreticulin -- an endoplasmic reticulum protein with calcium-binding activity is also found in the extracellular matrix.</title>
        <authorList>
            <person name="Somogyi E."/>
            <person name="Petersson U."/>
            <person name="Hultenby K."/>
            <person name="Wendel M."/>
        </authorList>
    </citation>
    <scope>PARTIAL PROTEIN SEQUENCE</scope>
    <scope>SUBCELLULAR LOCATION</scope>
</reference>
<keyword id="KW-0007">Acetylation</keyword>
<keyword id="KW-0106">Calcium</keyword>
<keyword id="KW-0143">Chaperone</keyword>
<keyword id="KW-0963">Cytoplasm</keyword>
<keyword id="KW-0968">Cytoplasmic vesicle</keyword>
<keyword id="KW-0903">Direct protein sequencing</keyword>
<keyword id="KW-1015">Disulfide bond</keyword>
<keyword id="KW-0256">Endoplasmic reticulum</keyword>
<keyword id="KW-0272">Extracellular matrix</keyword>
<keyword id="KW-0325">Glycoprotein</keyword>
<keyword id="KW-0379">Hydroxylation</keyword>
<keyword id="KW-0430">Lectin</keyword>
<keyword id="KW-0458">Lysosome</keyword>
<keyword id="KW-0479">Metal-binding</keyword>
<keyword id="KW-1185">Reference proteome</keyword>
<keyword id="KW-0677">Repeat</keyword>
<keyword id="KW-0703">Sarcoplasmic reticulum</keyword>
<keyword id="KW-0964">Secreted</keyword>
<keyword id="KW-0732">Signal</keyword>
<keyword id="KW-0862">Zinc</keyword>
<comment type="function">
    <text evidence="4 5 6">Calcium-binding chaperone that promotes folding, oligomeric assembly and quality control in the endoplasmic reticulum (ER) via the calreticulin/calnexin cycle. This lectin interacts transiently with almost all of the monoglucosylated glycoproteins that are synthesized in the ER. Interacts with the DNA-binding domain of NR3C1 and mediates its nuclear export (By similarity). Involved in maternal gene expression regulation. May participate in oocyte maturation via the regulation of calcium homeostasis (By similarity). Present in the cortical granules of non-activated oocytes, is exocytosed during the cortical reaction in response to oocyte activation and might participate in the block to polyspermy (By similarity).</text>
</comment>
<comment type="subunit">
    <text evidence="2 3 4">Monomer. Component of an EIF2 complex at least composed of CELF1/CUGBP1, CALR, CALR3, EIF2S1, EIF2S2, HSP90B1 and HSPA5. Interacts with PDIA3/ERp57 and SPACA9 (By similarity). Interacts with TRIM21. Interacts with NR3C1. Interacts with PPIB. Interacts (via P-domain) with PDIA5. Interacts with GABARAP. Interacts with CLCC1 (By similarity).</text>
</comment>
<comment type="subcellular location">
    <subcellularLocation>
        <location evidence="4">Endoplasmic reticulum lumen</location>
    </subcellularLocation>
    <subcellularLocation>
        <location evidence="4">Cytoplasm</location>
        <location evidence="4">Cytosol</location>
    </subcellularLocation>
    <subcellularLocation>
        <location evidence="4">Secreted</location>
        <location evidence="4">Extracellular space</location>
        <location evidence="4">Extracellular matrix</location>
    </subcellularLocation>
    <subcellularLocation>
        <location evidence="4">Cell surface</location>
    </subcellularLocation>
    <subcellularLocation>
        <location evidence="5">Sarcoplasmic reticulum lumen</location>
    </subcellularLocation>
    <subcellularLocation>
        <location evidence="6">Cytoplasmic vesicle</location>
        <location evidence="6">Secretory vesicle</location>
        <location evidence="6">Cortical granule</location>
    </subcellularLocation>
    <subcellularLocation>
        <location evidence="4">Cytolytic granule</location>
    </subcellularLocation>
    <text evidence="4 5 6">Also found in cell surface (T cells), cytosol and extracellular matrix. During oocyte maturation and after parthenogenetic activation accumulates in cortical granules. In pronuclear and early cleaved embryos localizes weakly to cytoplasm around nucleus and more strongly in the region near the cortex (By similarity). In cortical granules of non-activated oocytes, is exocytosed during the cortical reaction in response to oocyte activation (By similarity).</text>
</comment>
<comment type="domain">
    <text evidence="1">Can be divided into a N-terminal globular domain, a proline-rich P-domain forming an elongated arm-like structure and a C-terminal acidic domain. The P-domain binds one molecule of calcium with high affinity, whereas the acidic C-domain binds multiple calcium ions with low affinity (By similarity).</text>
</comment>
<comment type="domain">
    <text evidence="1">The interaction with glycans occurs through a binding site in the globular lectin domain.</text>
</comment>
<comment type="domain">
    <text evidence="1">The zinc binding sites are localized to the N-domain.</text>
</comment>
<comment type="domain">
    <text evidence="1">Associates with PDIA3 through the tip of the extended arm formed by the P-domain.</text>
</comment>
<comment type="similarity">
    <text evidence="11">Belongs to the calreticulin family.</text>
</comment>
<name>CALR_BOVIN</name>
<protein>
    <recommendedName>
        <fullName>Calreticulin</fullName>
    </recommendedName>
    <alternativeName>
        <fullName>CRP55</fullName>
    </alternativeName>
    <alternativeName>
        <fullName>Calregulin</fullName>
    </alternativeName>
    <alternativeName>
        <fullName>HACBP</fullName>
    </alternativeName>
</protein>
<proteinExistence type="evidence at protein level"/>
<evidence type="ECO:0000250" key="1"/>
<evidence type="ECO:0000250" key="2">
    <source>
        <dbReference type="UniProtKB" id="P14211"/>
    </source>
</evidence>
<evidence type="ECO:0000250" key="3">
    <source>
        <dbReference type="UniProtKB" id="P18418"/>
    </source>
</evidence>
<evidence type="ECO:0000250" key="4">
    <source>
        <dbReference type="UniProtKB" id="P27797"/>
    </source>
</evidence>
<evidence type="ECO:0000250" key="5">
    <source>
        <dbReference type="UniProtKB" id="P28491"/>
    </source>
</evidence>
<evidence type="ECO:0000250" key="6">
    <source>
        <dbReference type="UniProtKB" id="Q8K3H7"/>
    </source>
</evidence>
<evidence type="ECO:0000255" key="7">
    <source>
        <dbReference type="PROSITE-ProRule" id="PRU10138"/>
    </source>
</evidence>
<evidence type="ECO:0000256" key="8">
    <source>
        <dbReference type="SAM" id="MobiDB-lite"/>
    </source>
</evidence>
<evidence type="ECO:0000269" key="9">
    <source>
    </source>
</evidence>
<evidence type="ECO:0000269" key="10">
    <source>
    </source>
</evidence>
<evidence type="ECO:0000305" key="11"/>
<sequence length="417" mass="48039">MLLPVPLLLGLLGLAAADPTVYFKEQFLDGDGWTERWIESKHKPDFGKFVLSSGKFYGDQEKDKGLQTSQDARFYALSARFEPFSNKGQTLVVQFTVKHEQNIDCGGGYVKLFPAGLDQTDMHGDSEYNIMFGPDICGPGTKKVHVIFNYKGKNVLINKDIRCKDDEFTHLYTLIVRPNNTYEVKIDNSQVESGSLEDDWDFLPPKKIKDPDAAKPEDWDDRAKIDDPTDSKPEDWDKPEHIPDPDAKKPEDWDEEMDGEWEPPVIQNPEYKGEWKPRQIDNPEYKGIWIHPEIDNPEYSPDSNIYAYENFAVLGLDLWQVKSGTIFDNFLITNDEAYAEEFGNETWGVTKAAEKQMKDKQDEEQRLHEEEEEKKGKEEEEADKDDDEDKDEDEEDEDEKEEEEEEDAAAGQAKDEL</sequence>
<gene>
    <name type="primary">CALR</name>
    <name type="synonym">CRT</name>
</gene>
<dbReference type="EMBL" id="L13462">
    <property type="protein sequence ID" value="AAC37307.1"/>
    <property type="molecule type" value="mRNA"/>
</dbReference>
<dbReference type="EMBL" id="AB067687">
    <property type="protein sequence ID" value="BAB86913.1"/>
    <property type="molecule type" value="mRNA"/>
</dbReference>
<dbReference type="PIR" id="A33208">
    <property type="entry name" value="A33208"/>
</dbReference>
<dbReference type="PIR" id="S36799">
    <property type="entry name" value="S36799"/>
</dbReference>
<dbReference type="PIR" id="S43376">
    <property type="entry name" value="S43376"/>
</dbReference>
<dbReference type="RefSeq" id="NP_776425.1">
    <property type="nucleotide sequence ID" value="NM_174000.2"/>
</dbReference>
<dbReference type="SMR" id="P52193"/>
<dbReference type="FunCoup" id="P52193">
    <property type="interactions" value="3250"/>
</dbReference>
<dbReference type="IntAct" id="P52193">
    <property type="interactions" value="2"/>
</dbReference>
<dbReference type="STRING" id="9913.ENSBTAP00000020111"/>
<dbReference type="GlyCosmos" id="P52193">
    <property type="glycosylation" value="1 site, No reported glycans"/>
</dbReference>
<dbReference type="GlyGen" id="P52193">
    <property type="glycosylation" value="1 site"/>
</dbReference>
<dbReference type="PaxDb" id="9913-ENSBTAP00000020111"/>
<dbReference type="PeptideAtlas" id="P52193"/>
<dbReference type="GeneID" id="281036"/>
<dbReference type="KEGG" id="bta:281036"/>
<dbReference type="CTD" id="811"/>
<dbReference type="eggNOG" id="KOG0674">
    <property type="taxonomic scope" value="Eukaryota"/>
</dbReference>
<dbReference type="InParanoid" id="P52193"/>
<dbReference type="OrthoDB" id="1938156at2759"/>
<dbReference type="Proteomes" id="UP000009136">
    <property type="component" value="Unplaced"/>
</dbReference>
<dbReference type="GO" id="GO:0009986">
    <property type="term" value="C:cell surface"/>
    <property type="evidence" value="ECO:0007669"/>
    <property type="project" value="UniProtKB-SubCell"/>
</dbReference>
<dbReference type="GO" id="GO:0060473">
    <property type="term" value="C:cortical granule"/>
    <property type="evidence" value="ECO:0000250"/>
    <property type="project" value="UniProtKB"/>
</dbReference>
<dbReference type="GO" id="GO:0044194">
    <property type="term" value="C:cytolytic granule"/>
    <property type="evidence" value="ECO:0007669"/>
    <property type="project" value="UniProtKB-SubCell"/>
</dbReference>
<dbReference type="GO" id="GO:0005829">
    <property type="term" value="C:cytosol"/>
    <property type="evidence" value="ECO:0007669"/>
    <property type="project" value="UniProtKB-SubCell"/>
</dbReference>
<dbReference type="GO" id="GO:0005789">
    <property type="term" value="C:endoplasmic reticulum membrane"/>
    <property type="evidence" value="ECO:0000318"/>
    <property type="project" value="GO_Central"/>
</dbReference>
<dbReference type="GO" id="GO:0005576">
    <property type="term" value="C:extracellular region"/>
    <property type="evidence" value="ECO:0007669"/>
    <property type="project" value="UniProtKB-KW"/>
</dbReference>
<dbReference type="GO" id="GO:0033018">
    <property type="term" value="C:sarcoplasmic reticulum lumen"/>
    <property type="evidence" value="ECO:0007669"/>
    <property type="project" value="UniProtKB-SubCell"/>
</dbReference>
<dbReference type="GO" id="GO:0005509">
    <property type="term" value="F:calcium ion binding"/>
    <property type="evidence" value="ECO:0000250"/>
    <property type="project" value="UniProtKB"/>
</dbReference>
<dbReference type="GO" id="GO:0030246">
    <property type="term" value="F:carbohydrate binding"/>
    <property type="evidence" value="ECO:0007669"/>
    <property type="project" value="UniProtKB-KW"/>
</dbReference>
<dbReference type="GO" id="GO:0051082">
    <property type="term" value="F:unfolded protein binding"/>
    <property type="evidence" value="ECO:0007669"/>
    <property type="project" value="InterPro"/>
</dbReference>
<dbReference type="GO" id="GO:0036503">
    <property type="term" value="P:ERAD pathway"/>
    <property type="evidence" value="ECO:0000318"/>
    <property type="project" value="GO_Central"/>
</dbReference>
<dbReference type="GO" id="GO:0006457">
    <property type="term" value="P:protein folding"/>
    <property type="evidence" value="ECO:0000318"/>
    <property type="project" value="GO_Central"/>
</dbReference>
<dbReference type="GO" id="GO:0050821">
    <property type="term" value="P:protein stabilization"/>
    <property type="evidence" value="ECO:0000250"/>
    <property type="project" value="UniProtKB"/>
</dbReference>
<dbReference type="FunFam" id="2.10.250.10:FF:000002">
    <property type="entry name" value="Calreticulin"/>
    <property type="match status" value="1"/>
</dbReference>
<dbReference type="FunFam" id="2.60.120.200:FF:000113">
    <property type="entry name" value="Calreticulin 3"/>
    <property type="match status" value="1"/>
</dbReference>
<dbReference type="FunFam" id="2.60.120.200:FF:000122">
    <property type="entry name" value="Calreticulin 3"/>
    <property type="match status" value="1"/>
</dbReference>
<dbReference type="Gene3D" id="2.60.120.200">
    <property type="match status" value="1"/>
</dbReference>
<dbReference type="Gene3D" id="2.10.250.10">
    <property type="entry name" value="Calreticulin/calnexin, P domain"/>
    <property type="match status" value="1"/>
</dbReference>
<dbReference type="InterPro" id="IPR001580">
    <property type="entry name" value="Calret/calnex"/>
</dbReference>
<dbReference type="InterPro" id="IPR018124">
    <property type="entry name" value="Calret/calnex_CS"/>
</dbReference>
<dbReference type="InterPro" id="IPR009169">
    <property type="entry name" value="Calreticulin"/>
</dbReference>
<dbReference type="InterPro" id="IPR009033">
    <property type="entry name" value="Calreticulin/calnexin_P_dom_sf"/>
</dbReference>
<dbReference type="InterPro" id="IPR013320">
    <property type="entry name" value="ConA-like_dom_sf"/>
</dbReference>
<dbReference type="PANTHER" id="PTHR11073:SF16">
    <property type="entry name" value="CALRETICULIN"/>
    <property type="match status" value="1"/>
</dbReference>
<dbReference type="PANTHER" id="PTHR11073">
    <property type="entry name" value="CALRETICULIN AND CALNEXIN"/>
    <property type="match status" value="1"/>
</dbReference>
<dbReference type="Pfam" id="PF00262">
    <property type="entry name" value="Calreticulin"/>
    <property type="match status" value="2"/>
</dbReference>
<dbReference type="PIRSF" id="PIRSF002356">
    <property type="entry name" value="Calreticulin"/>
    <property type="match status" value="1"/>
</dbReference>
<dbReference type="PRINTS" id="PR00626">
    <property type="entry name" value="CALRETICULIN"/>
</dbReference>
<dbReference type="SUPFAM" id="SSF49899">
    <property type="entry name" value="Concanavalin A-like lectins/glucanases"/>
    <property type="match status" value="1"/>
</dbReference>
<dbReference type="SUPFAM" id="SSF63887">
    <property type="entry name" value="P-domain of calnexin/calreticulin"/>
    <property type="match status" value="1"/>
</dbReference>
<dbReference type="PROSITE" id="PS00803">
    <property type="entry name" value="CALRETICULIN_1"/>
    <property type="match status" value="1"/>
</dbReference>
<dbReference type="PROSITE" id="PS00804">
    <property type="entry name" value="CALRETICULIN_2"/>
    <property type="match status" value="1"/>
</dbReference>
<dbReference type="PROSITE" id="PS00805">
    <property type="entry name" value="CALRETICULIN_REPEAT"/>
    <property type="match status" value="3"/>
</dbReference>
<dbReference type="PROSITE" id="PS00014">
    <property type="entry name" value="ER_TARGET"/>
    <property type="match status" value="1"/>
</dbReference>
<feature type="signal peptide" evidence="9 10">
    <location>
        <begin position="1"/>
        <end position="17"/>
    </location>
</feature>
<feature type="chain" id="PRO_0000004170" description="Calreticulin">
    <location>
        <begin position="18"/>
        <end position="417"/>
    </location>
</feature>
<feature type="repeat" description="1-1">
    <location>
        <begin position="191"/>
        <end position="202"/>
    </location>
</feature>
<feature type="repeat" description="1-2">
    <location>
        <begin position="210"/>
        <end position="221"/>
    </location>
</feature>
<feature type="repeat" description="1-3">
    <location>
        <begin position="227"/>
        <end position="238"/>
    </location>
</feature>
<feature type="repeat" description="1-4">
    <location>
        <begin position="244"/>
        <end position="255"/>
    </location>
</feature>
<feature type="repeat" description="2-1">
    <location>
        <begin position="259"/>
        <end position="269"/>
    </location>
</feature>
<feature type="repeat" description="2-2">
    <location>
        <begin position="273"/>
        <end position="283"/>
    </location>
</feature>
<feature type="repeat" description="2-3">
    <location>
        <begin position="287"/>
        <end position="297"/>
    </location>
</feature>
<feature type="region of interest" description="N-domain">
    <location>
        <begin position="18"/>
        <end position="197"/>
    </location>
</feature>
<feature type="region of interest" description="4 X approximate repeats">
    <location>
        <begin position="191"/>
        <end position="255"/>
    </location>
</feature>
<feature type="region of interest" description="Disordered" evidence="8">
    <location>
        <begin position="193"/>
        <end position="270"/>
    </location>
</feature>
<feature type="region of interest" description="P-domain">
    <location>
        <begin position="198"/>
        <end position="308"/>
    </location>
</feature>
<feature type="region of interest" description="Interaction with PPIB" evidence="1">
    <location>
        <begin position="237"/>
        <end position="270"/>
    </location>
</feature>
<feature type="region of interest" description="3 X approximate repeats">
    <location>
        <begin position="259"/>
        <end position="297"/>
    </location>
</feature>
<feature type="region of interest" description="C-domain">
    <location>
        <begin position="309"/>
        <end position="417"/>
    </location>
</feature>
<feature type="region of interest" description="Disordered" evidence="8">
    <location>
        <begin position="350"/>
        <end position="417"/>
    </location>
</feature>
<feature type="short sequence motif" description="Prevents secretion from ER" evidence="7">
    <location>
        <begin position="414"/>
        <end position="417"/>
    </location>
</feature>
<feature type="compositionally biased region" description="Basic and acidic residues" evidence="8">
    <location>
        <begin position="207"/>
        <end position="251"/>
    </location>
</feature>
<feature type="compositionally biased region" description="Acidic residues" evidence="8">
    <location>
        <begin position="252"/>
        <end position="261"/>
    </location>
</feature>
<feature type="compositionally biased region" description="Basic and acidic residues" evidence="8">
    <location>
        <begin position="352"/>
        <end position="378"/>
    </location>
</feature>
<feature type="compositionally biased region" description="Acidic residues" evidence="8">
    <location>
        <begin position="379"/>
        <end position="408"/>
    </location>
</feature>
<feature type="binding site" evidence="1">
    <location>
        <position position="26"/>
    </location>
    <ligand>
        <name>Ca(2+)</name>
        <dbReference type="ChEBI" id="CHEBI:29108"/>
    </ligand>
</feature>
<feature type="binding site" evidence="1">
    <location>
        <position position="62"/>
    </location>
    <ligand>
        <name>Ca(2+)</name>
        <dbReference type="ChEBI" id="CHEBI:29108"/>
    </ligand>
</feature>
<feature type="binding site" evidence="1">
    <location>
        <position position="64"/>
    </location>
    <ligand>
        <name>Ca(2+)</name>
        <dbReference type="ChEBI" id="CHEBI:29108"/>
    </ligand>
</feature>
<feature type="binding site" evidence="2">
    <location>
        <position position="109"/>
    </location>
    <ligand>
        <name>an alpha-D-glucoside</name>
        <dbReference type="ChEBI" id="CHEBI:22390"/>
    </ligand>
</feature>
<feature type="binding site" evidence="2">
    <location>
        <position position="111"/>
    </location>
    <ligand>
        <name>an alpha-D-glucoside</name>
        <dbReference type="ChEBI" id="CHEBI:22390"/>
    </ligand>
</feature>
<feature type="binding site" evidence="2">
    <location>
        <position position="128"/>
    </location>
    <ligand>
        <name>an alpha-D-glucoside</name>
        <dbReference type="ChEBI" id="CHEBI:22390"/>
    </ligand>
</feature>
<feature type="binding site" evidence="2">
    <location>
        <position position="135"/>
    </location>
    <ligand>
        <name>an alpha-D-glucoside</name>
        <dbReference type="ChEBI" id="CHEBI:22390"/>
    </ligand>
</feature>
<feature type="binding site" evidence="2">
    <location>
        <position position="317"/>
    </location>
    <ligand>
        <name>an alpha-D-glucoside</name>
        <dbReference type="ChEBI" id="CHEBI:22390"/>
    </ligand>
</feature>
<feature type="binding site" evidence="1">
    <location>
        <position position="328"/>
    </location>
    <ligand>
        <name>Ca(2+)</name>
        <dbReference type="ChEBI" id="CHEBI:29108"/>
    </ligand>
</feature>
<feature type="modified residue" description="N6-acetyllysine" evidence="4">
    <location>
        <position position="48"/>
    </location>
</feature>
<feature type="modified residue" description="N6-(2-hydroxyisobutyryl)lysine" evidence="4">
    <location>
        <position position="64"/>
    </location>
</feature>
<feature type="modified residue" description="N6-acetyllysine" evidence="4">
    <location>
        <position position="159"/>
    </location>
</feature>
<feature type="modified residue" description="N6-acetyllysine" evidence="4">
    <location>
        <position position="209"/>
    </location>
</feature>
<feature type="glycosylation site" description="N-linked (GlcNAc...) asparagine">
    <location>
        <position position="179"/>
    </location>
</feature>
<feature type="disulfide bond">
    <location>
        <begin position="137"/>
        <end position="163"/>
    </location>
</feature>
<feature type="sequence conflict" description="In Ref. 1; AAC37307." evidence="11" ref="1">
    <original>MLLPVPLLLGLLGLAAADPTVYFKEQFLDGDGWTERWIESKHKPDFGKFVLSSGKFYGDQEKDKGLQTSQDARFYALSARFEPFSNKGQTLVVQFTVKH</original>
    <variation>MCLNHFLLSLVLSIVLLFHFVFYICLHHIVTFLREETVFFSEQFLTLDLKYKASKLSSIREALSMSKVGIIENFCFSEISFLQESIKSHGRRTLVGCSPWGHE</variation>
    <location>
        <begin position="1"/>
        <end position="99"/>
    </location>
</feature>
<feature type="sequence conflict" description="In Ref. 4; AA sequence." evidence="11" ref="4">
    <original>DPTV</original>
    <variation>EPAI</variation>
    <location>
        <begin position="18"/>
        <end position="21"/>
    </location>
</feature>
<feature type="sequence conflict" description="In Ref. 1; AAC37307." evidence="11" ref="1">
    <original>KL</original>
    <variation>NV</variation>
    <location>
        <begin position="111"/>
        <end position="112"/>
    </location>
</feature>
<feature type="sequence conflict" description="In Ref. 1; AAC37307." evidence="11" ref="1">
    <original>V</original>
    <variation>L</variation>
    <location>
        <position position="265"/>
    </location>
</feature>
<feature type="sequence conflict" description="In Ref. 1; AAC37307." evidence="11" ref="1">
    <original>D</original>
    <variation>E</variation>
    <location>
        <position position="383"/>
    </location>
</feature>
<feature type="sequence conflict" description="In Ref. 1; AAC37307." evidence="11" ref="1">
    <original>G</original>
    <variation>A</variation>
    <location>
        <position position="411"/>
    </location>
</feature>
<organism>
    <name type="scientific">Bos taurus</name>
    <name type="common">Bovine</name>
    <dbReference type="NCBI Taxonomy" id="9913"/>
    <lineage>
        <taxon>Eukaryota</taxon>
        <taxon>Metazoa</taxon>
        <taxon>Chordata</taxon>
        <taxon>Craniata</taxon>
        <taxon>Vertebrata</taxon>
        <taxon>Euteleostomi</taxon>
        <taxon>Mammalia</taxon>
        <taxon>Eutheria</taxon>
        <taxon>Laurasiatheria</taxon>
        <taxon>Artiodactyla</taxon>
        <taxon>Ruminantia</taxon>
        <taxon>Pecora</taxon>
        <taxon>Bovidae</taxon>
        <taxon>Bovinae</taxon>
        <taxon>Bos</taxon>
    </lineage>
</organism>